<comment type="function">
    <text evidence="1">Part of the Tol-Pal system, which plays a role in outer membrane invagination during cell division and is important for maintaining outer membrane integrity.</text>
</comment>
<comment type="subunit">
    <text evidence="1">The Tol-Pal system is composed of five core proteins: the inner membrane proteins TolA, TolQ and TolR, the periplasmic protein TolB and the outer membrane protein Pal. They form a network linking the inner and outer membranes and the peptidoglycan layer.</text>
</comment>
<comment type="subcellular location">
    <subcellularLocation>
        <location evidence="1">Periplasm</location>
    </subcellularLocation>
</comment>
<comment type="similarity">
    <text evidence="1">Belongs to the TolB family.</text>
</comment>
<gene>
    <name evidence="1" type="primary">tolB</name>
    <name type="ordered locus">BMEA_A1749</name>
</gene>
<name>TOLB_BRUMB</name>
<accession>C0REV9</accession>
<feature type="signal peptide" evidence="1">
    <location>
        <begin position="1"/>
        <end position="33"/>
    </location>
</feature>
<feature type="chain" id="PRO_1000147660" description="Tol-Pal system protein TolB" evidence="1">
    <location>
        <begin position="34"/>
        <end position="443"/>
    </location>
</feature>
<protein>
    <recommendedName>
        <fullName evidence="1">Tol-Pal system protein TolB</fullName>
    </recommendedName>
</protein>
<sequence>MKIGIINTKIRTVFSAFACMIAASLVCTMPARAVVEININKGVIEPLPIAITDFLSADQLGSNITSVIAADLERSGLFAPIDKGAFIEKISNPDAAPRFEDWKVINAQALVTGRITKQPDGRLKAEFRLWDTFGGQQMIGQQFFTTPDNWRRVAHIIADAIYERLTGDKGYFDTRVVFVDESGPAQKRVKRLAIMDQDGANVRFISDGRALSLTPRFSPNRQEVTYMSFEGGSPKVYLLQLETGQRELVGNFPGMTIAPRFSPDGQKVVMSLLQDDGSANIYTMDLRNRTTTRLTSSQAIDTGASYSPDGSQIVFTSDRGGRPQLYVMGADGSNPRRISMGDGSYSTPVWSPRGDLIAFTKQSQGQFSIGVMKTDGSGERLLTSGFHNEGPTWAPNGRVLMFFRKAAGAGGPKLFTIDLTGRNERQIQTPNFASDPAWSPLLE</sequence>
<dbReference type="EMBL" id="CP001488">
    <property type="protein sequence ID" value="ACO01431.1"/>
    <property type="molecule type" value="Genomic_DNA"/>
</dbReference>
<dbReference type="RefSeq" id="WP_002964785.1">
    <property type="nucleotide sequence ID" value="NC_012441.1"/>
</dbReference>
<dbReference type="SMR" id="C0REV9"/>
<dbReference type="GeneID" id="97533149"/>
<dbReference type="KEGG" id="bmi:BMEA_A1749"/>
<dbReference type="HOGENOM" id="CLU_047123_0_0_5"/>
<dbReference type="Proteomes" id="UP000001748">
    <property type="component" value="Chromosome I"/>
</dbReference>
<dbReference type="GO" id="GO:0042597">
    <property type="term" value="C:periplasmic space"/>
    <property type="evidence" value="ECO:0007669"/>
    <property type="project" value="UniProtKB-SubCell"/>
</dbReference>
<dbReference type="GO" id="GO:0051301">
    <property type="term" value="P:cell division"/>
    <property type="evidence" value="ECO:0007669"/>
    <property type="project" value="UniProtKB-UniRule"/>
</dbReference>
<dbReference type="GO" id="GO:0017038">
    <property type="term" value="P:protein import"/>
    <property type="evidence" value="ECO:0007669"/>
    <property type="project" value="InterPro"/>
</dbReference>
<dbReference type="Gene3D" id="2.120.10.30">
    <property type="entry name" value="TolB, C-terminal domain"/>
    <property type="match status" value="1"/>
</dbReference>
<dbReference type="Gene3D" id="3.40.50.10070">
    <property type="entry name" value="TolB, N-terminal domain"/>
    <property type="match status" value="1"/>
</dbReference>
<dbReference type="HAMAP" id="MF_00671">
    <property type="entry name" value="TolB"/>
    <property type="match status" value="1"/>
</dbReference>
<dbReference type="InterPro" id="IPR011042">
    <property type="entry name" value="6-blade_b-propeller_TolB-like"/>
</dbReference>
<dbReference type="InterPro" id="IPR011659">
    <property type="entry name" value="PD40"/>
</dbReference>
<dbReference type="InterPro" id="IPR014167">
    <property type="entry name" value="Tol-Pal_TolB"/>
</dbReference>
<dbReference type="InterPro" id="IPR007195">
    <property type="entry name" value="TolB_N"/>
</dbReference>
<dbReference type="NCBIfam" id="TIGR02800">
    <property type="entry name" value="propeller_TolB"/>
    <property type="match status" value="1"/>
</dbReference>
<dbReference type="PANTHER" id="PTHR36842:SF1">
    <property type="entry name" value="PROTEIN TOLB"/>
    <property type="match status" value="1"/>
</dbReference>
<dbReference type="PANTHER" id="PTHR36842">
    <property type="entry name" value="PROTEIN TOLB HOMOLOG"/>
    <property type="match status" value="1"/>
</dbReference>
<dbReference type="Pfam" id="PF07676">
    <property type="entry name" value="PD40"/>
    <property type="match status" value="3"/>
</dbReference>
<dbReference type="Pfam" id="PF04052">
    <property type="entry name" value="TolB_N"/>
    <property type="match status" value="1"/>
</dbReference>
<dbReference type="SUPFAM" id="SSF52964">
    <property type="entry name" value="TolB, N-terminal domain"/>
    <property type="match status" value="1"/>
</dbReference>
<dbReference type="SUPFAM" id="SSF69304">
    <property type="entry name" value="Tricorn protease N-terminal domain"/>
    <property type="match status" value="1"/>
</dbReference>
<organism>
    <name type="scientific">Brucella melitensis biotype 2 (strain ATCC 23457)</name>
    <dbReference type="NCBI Taxonomy" id="546272"/>
    <lineage>
        <taxon>Bacteria</taxon>
        <taxon>Pseudomonadati</taxon>
        <taxon>Pseudomonadota</taxon>
        <taxon>Alphaproteobacteria</taxon>
        <taxon>Hyphomicrobiales</taxon>
        <taxon>Brucellaceae</taxon>
        <taxon>Brucella/Ochrobactrum group</taxon>
        <taxon>Brucella</taxon>
    </lineage>
</organism>
<proteinExistence type="inferred from homology"/>
<evidence type="ECO:0000255" key="1">
    <source>
        <dbReference type="HAMAP-Rule" id="MF_00671"/>
    </source>
</evidence>
<keyword id="KW-0131">Cell cycle</keyword>
<keyword id="KW-0132">Cell division</keyword>
<keyword id="KW-0574">Periplasm</keyword>
<keyword id="KW-0732">Signal</keyword>
<reference key="1">
    <citation type="submission" date="2009-03" db="EMBL/GenBank/DDBJ databases">
        <title>Brucella melitensis ATCC 23457 whole genome shotgun sequencing project.</title>
        <authorList>
            <person name="Setubal J.C."/>
            <person name="Boyle S."/>
            <person name="Crasta O.R."/>
            <person name="Gillespie J.J."/>
            <person name="Kenyon R.W."/>
            <person name="Lu J."/>
            <person name="Mane S."/>
            <person name="Nagrani S."/>
            <person name="Shallom J.M."/>
            <person name="Shallom S."/>
            <person name="Shukla M."/>
            <person name="Snyder E.E."/>
            <person name="Sobral B.W."/>
            <person name="Wattam A.R."/>
            <person name="Will R."/>
            <person name="Williams K."/>
            <person name="Yoo H."/>
            <person name="Munk C."/>
            <person name="Tapia R."/>
            <person name="Han C."/>
            <person name="Detter J.C."/>
            <person name="Bruce D."/>
            <person name="Brettin T.S."/>
        </authorList>
    </citation>
    <scope>NUCLEOTIDE SEQUENCE [LARGE SCALE GENOMIC DNA]</scope>
    <source>
        <strain>ATCC 23457</strain>
    </source>
</reference>